<proteinExistence type="evidence at transcript level"/>
<accession>Q9D4I2</accession>
<accession>B2RQ44</accession>
<accession>F8WHB9</accession>
<sequence length="1268" mass="140874">MTAADHPAFGRDEEAALLLERTHHRHDPRWLLPVSPHVCMACALELLPEPGVSLVRKKHVVFCFQDALVRHTSLVAQLVAQDQRVCIHFVRVLFGLLNSVEDGSMADLCIEVLVQLTTQPNMEQTIRCLMNECHRELCNLRSMGGSLATTTLLGKLVDTIPGLADELVMEHGNLMEHLLRGLVYPNEGVQASICYLYGKLYSSPTAAEMLSGHFREKLCALFLSTLDSAQTKDLQINCLGLLRQLLKYDLFVSLIMNKSVPVEGAESVERPSRETSLPLVLKKFLLSRDEILQVASSHCITAVLVHSPAKHAVAFIHADIPEFLFEHLSSSSEILVWSSYNCLILLAEEPLFFSKCHTVYGIEAVVRSLQGSQQMTNTELHTQGLLLFKEILTRQPEEIRLFTSSALCRDASRALQEAVSSPVLAVAAEALRAISAFLRKDHQSSLPVQYRALRALLEAMLSRCMEFSQTPLNRRSLGHACSRNSEKATLRKGSFLLSTLEGFRNACRLAVEFQGEPSAQENPFTAPSAEKEDTLEAFSEYLLSACDSQCIPMVMRYSEEATHPKLMEVFLSILHSLFVIIPHMKVKFSRKLADSSFIRLTLELKARFCSGQSHSSLNQVCSSFLYYMCLNLLSAPEKTEPLSQEELSAVSEFLQHGLPHISSRTPESLAFLSDRQYVEAATRQRQYCILLLFYLAHIHDDRFVPEAELFVAVQSFLLSLQDQGECPPPVVCKASMYLLAVCGDKDSALAEAVISAIRKFLEGIPDLRGVYTHHPLLLRFFLAYPGLMSRFGHRVLELWFSWEESGYENLDDDSSPGRTVFPANLAALFRVLQSTPSILLILLDLVYSSPVDTARKVLIVLRVFLWENEDVKVGGLIRGHFLLILQRLLVEYGASTSGGNLPLLLNLLSLVQMRNESEQELDSMAMKLLHQVSMLCGKCSPAHVDILQPSFNFLYWSLHQTTPSSQKRAAAVLLSSTALLELLEKMLALTWTETGSSPRTPLLSSAWLLTASFSAQQHNGNLQVHRTLSVELNQVLKALSFPKKMSALLSAAILRFLRTALQQSFSSALVVLVPSGDQPLSTPEDAVLAPLGKSQVLALLIGLQNLLVQKDPLLSQACIGCLEALLDYLHARSPDIALHVASQPWNRFLLFTLLDAGENSFLRPEILRLMTLFVQYRSSCVLSREEVGLILQGAALVDLSALSNDTLQALHGFLLQVQSMGLLNDQHMTQTLQSSLEGLCSRTFPAQPLFQDMLCLGGVSVSQAHIRG</sequence>
<gene>
    <name evidence="13" type="primary">Mei1</name>
</gene>
<name>MEII1_MOUSE</name>
<evidence type="ECO:0000269" key="1">
    <source>
    </source>
</evidence>
<evidence type="ECO:0000269" key="2">
    <source>
    </source>
</evidence>
<evidence type="ECO:0000269" key="3">
    <source>
    </source>
</evidence>
<evidence type="ECO:0000269" key="4">
    <source>
    </source>
</evidence>
<evidence type="ECO:0000269" key="5">
    <source>
    </source>
</evidence>
<evidence type="ECO:0000303" key="6">
    <source>
    </source>
</evidence>
<evidence type="ECO:0000303" key="7">
    <source>
    </source>
</evidence>
<evidence type="ECO:0000303" key="8">
    <source>
    </source>
</evidence>
<evidence type="ECO:0000305" key="9"/>
<evidence type="ECO:0000312" key="10">
    <source>
        <dbReference type="EMBL" id="AAI37750.1"/>
    </source>
</evidence>
<evidence type="ECO:0000312" key="11">
    <source>
        <dbReference type="EMBL" id="AAP74551.1"/>
    </source>
</evidence>
<evidence type="ECO:0000312" key="12">
    <source>
        <dbReference type="EMBL" id="BAB30279.2"/>
    </source>
</evidence>
<evidence type="ECO:0000312" key="13">
    <source>
        <dbReference type="MGI" id="MGI:3028590"/>
    </source>
</evidence>
<feature type="chain" id="PRO_0000347265" description="Meiosis inhibitor protein 1">
    <location>
        <begin position="1"/>
        <end position="1268"/>
    </location>
</feature>
<feature type="splice variant" id="VSP_052892" description="In isoform 2." evidence="6 7 8">
    <location>
        <begin position="1"/>
        <end position="374"/>
    </location>
</feature>
<feature type="sequence conflict" description="In Ref. 4; AAI37750." evidence="9" ref="4">
    <original>A</original>
    <variation>V</variation>
    <location>
        <position position="680"/>
    </location>
</feature>
<feature type="sequence conflict" description="In Ref. 4; AAI37750." evidence="9" ref="4">
    <original>V</original>
    <variation>A</variation>
    <location>
        <position position="863"/>
    </location>
</feature>
<feature type="sequence conflict" description="In Ref. 4; AAI37750." evidence="9" ref="4">
    <original>W</original>
    <variation>R</variation>
    <location>
        <position position="866"/>
    </location>
</feature>
<feature type="sequence conflict" description="In Ref. 4; AAI37750." evidence="9" ref="4">
    <original>A</original>
    <variation>S</variation>
    <location>
        <position position="894"/>
    </location>
</feature>
<feature type="sequence conflict" description="In Ref. 4; AAI37750." evidence="9" ref="4">
    <original>L</original>
    <variation>R</variation>
    <location>
        <position position="1199"/>
    </location>
</feature>
<comment type="function">
    <text evidence="2 3">Required for normal meiotic chromosome synapsis. May be involved in the formation of meiotic double-strand breaks (DSBs) in spermatocytes.</text>
</comment>
<comment type="alternative products">
    <event type="alternative splicing"/>
    <isoform>
        <id>Q9D4I2-1</id>
        <name>1</name>
        <sequence type="displayed"/>
    </isoform>
    <isoform>
        <id>Q9D4I2-2</id>
        <name evidence="2 4">2</name>
        <sequence type="described" ref="VSP_052892"/>
    </isoform>
</comment>
<comment type="tissue specificity">
    <text evidence="2">Strongly expressed in testis, weakly in brain, and not detected in spleen, liver, kidney, small intestine or colon.</text>
</comment>
<comment type="developmental stage">
    <text evidence="2">Highly expressed in 17 dpc ovaries. Expression is significantly reduced in newborn ovaries, and is undetectable in ovaries from 5 day and 8 week old mice.</text>
</comment>
<comment type="disruption phenotype">
    <text evidence="1 2 5">Mice are infertile due to meiotic arrest caused by defects in chromosome synapsis. They lack zygotene Rad51 foci, and are likely to be deficient in meiotic double-strand break (DSB) formation. In addition, mutant spermatocytes exhibit meiotic arrest at entry into pachynema, whereas oocytes progress to an abnormal metaphase I. MEI1-deficient oocytes are capable of fertilization. The zygotes are capable of initiating embryonic development but mostly arrest at the 2-4 cell stage. Among all the zygotes, approximately 5% are androgenetic and do not contain maternal chromosomes (PubMed:30388401).</text>
</comment>
<keyword id="KW-0025">Alternative splicing</keyword>
<keyword id="KW-0469">Meiosis</keyword>
<keyword id="KW-1185">Reference proteome</keyword>
<reference evidence="9 11" key="1">
    <citation type="journal article" date="2003" name="Proc. Natl. Acad. Sci. U.S.A.">
        <title>Positional cloning and characterization of Mei1, a vertebrate-specific gene required for normal meiotic chromosome synapsis in mice.</title>
        <authorList>
            <person name="Libby B.J."/>
            <person name="Reinholdt L.G."/>
            <person name="Schimenti J.C."/>
        </authorList>
    </citation>
    <scope>NUCLEOTIDE SEQUENCE [MRNA] (ISOFORM 2)</scope>
    <scope>FUNCTION</scope>
    <scope>TISSUE SPECIFICITY</scope>
    <scope>DEVELOPMENTAL STAGE</scope>
    <scope>DISRUPTION PHENOTYPE</scope>
    <source>
        <strain evidence="11">129S1/Sv</strain>
    </source>
</reference>
<reference evidence="9 12" key="2">
    <citation type="journal article" date="2005" name="Science">
        <title>The transcriptional landscape of the mammalian genome.</title>
        <authorList>
            <person name="Carninci P."/>
            <person name="Kasukawa T."/>
            <person name="Katayama S."/>
            <person name="Gough J."/>
            <person name="Frith M.C."/>
            <person name="Maeda N."/>
            <person name="Oyama R."/>
            <person name="Ravasi T."/>
            <person name="Lenhard B."/>
            <person name="Wells C."/>
            <person name="Kodzius R."/>
            <person name="Shimokawa K."/>
            <person name="Bajic V.B."/>
            <person name="Brenner S.E."/>
            <person name="Batalov S."/>
            <person name="Forrest A.R."/>
            <person name="Zavolan M."/>
            <person name="Davis M.J."/>
            <person name="Wilming L.G."/>
            <person name="Aidinis V."/>
            <person name="Allen J.E."/>
            <person name="Ambesi-Impiombato A."/>
            <person name="Apweiler R."/>
            <person name="Aturaliya R.N."/>
            <person name="Bailey T.L."/>
            <person name="Bansal M."/>
            <person name="Baxter L."/>
            <person name="Beisel K.W."/>
            <person name="Bersano T."/>
            <person name="Bono H."/>
            <person name="Chalk A.M."/>
            <person name="Chiu K.P."/>
            <person name="Choudhary V."/>
            <person name="Christoffels A."/>
            <person name="Clutterbuck D.R."/>
            <person name="Crowe M.L."/>
            <person name="Dalla E."/>
            <person name="Dalrymple B.P."/>
            <person name="de Bono B."/>
            <person name="Della Gatta G."/>
            <person name="di Bernardo D."/>
            <person name="Down T."/>
            <person name="Engstrom P."/>
            <person name="Fagiolini M."/>
            <person name="Faulkner G."/>
            <person name="Fletcher C.F."/>
            <person name="Fukushima T."/>
            <person name="Furuno M."/>
            <person name="Futaki S."/>
            <person name="Gariboldi M."/>
            <person name="Georgii-Hemming P."/>
            <person name="Gingeras T.R."/>
            <person name="Gojobori T."/>
            <person name="Green R.E."/>
            <person name="Gustincich S."/>
            <person name="Harbers M."/>
            <person name="Hayashi Y."/>
            <person name="Hensch T.K."/>
            <person name="Hirokawa N."/>
            <person name="Hill D."/>
            <person name="Huminiecki L."/>
            <person name="Iacono M."/>
            <person name="Ikeo K."/>
            <person name="Iwama A."/>
            <person name="Ishikawa T."/>
            <person name="Jakt M."/>
            <person name="Kanapin A."/>
            <person name="Katoh M."/>
            <person name="Kawasawa Y."/>
            <person name="Kelso J."/>
            <person name="Kitamura H."/>
            <person name="Kitano H."/>
            <person name="Kollias G."/>
            <person name="Krishnan S.P."/>
            <person name="Kruger A."/>
            <person name="Kummerfeld S.K."/>
            <person name="Kurochkin I.V."/>
            <person name="Lareau L.F."/>
            <person name="Lazarevic D."/>
            <person name="Lipovich L."/>
            <person name="Liu J."/>
            <person name="Liuni S."/>
            <person name="McWilliam S."/>
            <person name="Madan Babu M."/>
            <person name="Madera M."/>
            <person name="Marchionni L."/>
            <person name="Matsuda H."/>
            <person name="Matsuzawa S."/>
            <person name="Miki H."/>
            <person name="Mignone F."/>
            <person name="Miyake S."/>
            <person name="Morris K."/>
            <person name="Mottagui-Tabar S."/>
            <person name="Mulder N."/>
            <person name="Nakano N."/>
            <person name="Nakauchi H."/>
            <person name="Ng P."/>
            <person name="Nilsson R."/>
            <person name="Nishiguchi S."/>
            <person name="Nishikawa S."/>
            <person name="Nori F."/>
            <person name="Ohara O."/>
            <person name="Okazaki Y."/>
            <person name="Orlando V."/>
            <person name="Pang K.C."/>
            <person name="Pavan W.J."/>
            <person name="Pavesi G."/>
            <person name="Pesole G."/>
            <person name="Petrovsky N."/>
            <person name="Piazza S."/>
            <person name="Reed J."/>
            <person name="Reid J.F."/>
            <person name="Ring B.Z."/>
            <person name="Ringwald M."/>
            <person name="Rost B."/>
            <person name="Ruan Y."/>
            <person name="Salzberg S.L."/>
            <person name="Sandelin A."/>
            <person name="Schneider C."/>
            <person name="Schoenbach C."/>
            <person name="Sekiguchi K."/>
            <person name="Semple C.A."/>
            <person name="Seno S."/>
            <person name="Sessa L."/>
            <person name="Sheng Y."/>
            <person name="Shibata Y."/>
            <person name="Shimada H."/>
            <person name="Shimada K."/>
            <person name="Silva D."/>
            <person name="Sinclair B."/>
            <person name="Sperling S."/>
            <person name="Stupka E."/>
            <person name="Sugiura K."/>
            <person name="Sultana R."/>
            <person name="Takenaka Y."/>
            <person name="Taki K."/>
            <person name="Tammoja K."/>
            <person name="Tan S.L."/>
            <person name="Tang S."/>
            <person name="Taylor M.S."/>
            <person name="Tegner J."/>
            <person name="Teichmann S.A."/>
            <person name="Ueda H.R."/>
            <person name="van Nimwegen E."/>
            <person name="Verardo R."/>
            <person name="Wei C.L."/>
            <person name="Yagi K."/>
            <person name="Yamanishi H."/>
            <person name="Zabarovsky E."/>
            <person name="Zhu S."/>
            <person name="Zimmer A."/>
            <person name="Hide W."/>
            <person name="Bult C."/>
            <person name="Grimmond S.M."/>
            <person name="Teasdale R.D."/>
            <person name="Liu E.T."/>
            <person name="Brusic V."/>
            <person name="Quackenbush J."/>
            <person name="Wahlestedt C."/>
            <person name="Mattick J.S."/>
            <person name="Hume D.A."/>
            <person name="Kai C."/>
            <person name="Sasaki D."/>
            <person name="Tomaru Y."/>
            <person name="Fukuda S."/>
            <person name="Kanamori-Katayama M."/>
            <person name="Suzuki M."/>
            <person name="Aoki J."/>
            <person name="Arakawa T."/>
            <person name="Iida J."/>
            <person name="Imamura K."/>
            <person name="Itoh M."/>
            <person name="Kato T."/>
            <person name="Kawaji H."/>
            <person name="Kawagashira N."/>
            <person name="Kawashima T."/>
            <person name="Kojima M."/>
            <person name="Kondo S."/>
            <person name="Konno H."/>
            <person name="Nakano K."/>
            <person name="Ninomiya N."/>
            <person name="Nishio T."/>
            <person name="Okada M."/>
            <person name="Plessy C."/>
            <person name="Shibata K."/>
            <person name="Shiraki T."/>
            <person name="Suzuki S."/>
            <person name="Tagami M."/>
            <person name="Waki K."/>
            <person name="Watahiki A."/>
            <person name="Okamura-Oho Y."/>
            <person name="Suzuki H."/>
            <person name="Kawai J."/>
            <person name="Hayashizaki Y."/>
        </authorList>
    </citation>
    <scope>NUCLEOTIDE SEQUENCE [LARGE SCALE MRNA] (ISOFORM 2)</scope>
    <source>
        <strain evidence="12">C57BL/6J</strain>
        <tissue evidence="12">Testis</tissue>
    </source>
</reference>
<reference key="3">
    <citation type="journal article" date="2009" name="PLoS Biol.">
        <title>Lineage-specific biology revealed by a finished genome assembly of the mouse.</title>
        <authorList>
            <person name="Church D.M."/>
            <person name="Goodstadt L."/>
            <person name="Hillier L.W."/>
            <person name="Zody M.C."/>
            <person name="Goldstein S."/>
            <person name="She X."/>
            <person name="Bult C.J."/>
            <person name="Agarwala R."/>
            <person name="Cherry J.L."/>
            <person name="DiCuccio M."/>
            <person name="Hlavina W."/>
            <person name="Kapustin Y."/>
            <person name="Meric P."/>
            <person name="Maglott D."/>
            <person name="Birtle Z."/>
            <person name="Marques A.C."/>
            <person name="Graves T."/>
            <person name="Zhou S."/>
            <person name="Teague B."/>
            <person name="Potamousis K."/>
            <person name="Churas C."/>
            <person name="Place M."/>
            <person name="Herschleb J."/>
            <person name="Runnheim R."/>
            <person name="Forrest D."/>
            <person name="Amos-Landgraf J."/>
            <person name="Schwartz D.C."/>
            <person name="Cheng Z."/>
            <person name="Lindblad-Toh K."/>
            <person name="Eichler E.E."/>
            <person name="Ponting C.P."/>
        </authorList>
    </citation>
    <scope>NUCLEOTIDE SEQUENCE [LARGE SCALE GENOMIC DNA]</scope>
    <source>
        <strain>C57BL/6J</strain>
    </source>
</reference>
<reference evidence="9 10" key="4">
    <citation type="journal article" date="2004" name="Genome Res.">
        <title>The status, quality, and expansion of the NIH full-length cDNA project: the Mammalian Gene Collection (MGC).</title>
        <authorList>
            <consortium name="The MGC Project Team"/>
        </authorList>
    </citation>
    <scope>NUCLEOTIDE SEQUENCE [LARGE SCALE MRNA] (ISOFORM 2)</scope>
</reference>
<reference evidence="9" key="5">
    <citation type="journal article" date="2002" name="Dev. Biol.">
        <title>The mouse meiotic mutation mei1 disrupts chromosome synapsis with sexually dimorphic consequences for meiotic progression.</title>
        <authorList>
            <person name="Libby B.J."/>
            <person name="De La Fuente R."/>
            <person name="O'Brien M.J."/>
            <person name="Wigglesworth K."/>
            <person name="Cobb J."/>
            <person name="Inselman A."/>
            <person name="Eaker S."/>
            <person name="Handel M.A."/>
            <person name="Eppig J.J."/>
            <person name="Schimenti J.C."/>
        </authorList>
    </citation>
    <scope>DISRUPTION PHENOTYPE</scope>
</reference>
<reference evidence="9" key="6">
    <citation type="journal article" date="2005" name="Chromosoma">
        <title>Mei1 is epistatic to Dmc1 during mouse meiosis.</title>
        <authorList>
            <person name="Reinholdt L.G."/>
            <person name="Schimenti J.C."/>
        </authorList>
    </citation>
    <scope>FUNCTION</scope>
</reference>
<reference key="7">
    <citation type="journal article" date="2018" name="Am. J. Hum. Genet.">
        <title>Causative mutations and mechanism of androgenetic hydatidiform moles.</title>
        <authorList>
            <person name="Nguyen N.M.P."/>
            <person name="Ge Z.J."/>
            <person name="Reddy R."/>
            <person name="Fahiminiya S."/>
            <person name="Sauthier P."/>
            <person name="Bagga R."/>
            <person name="Sahin F.I."/>
            <person name="Mahadevan S."/>
            <person name="Osmond M."/>
            <person name="Breguet M."/>
            <person name="Rahimi K."/>
            <person name="Lapensee L."/>
            <person name="Hovanes K."/>
            <person name="Srinivasan R."/>
            <person name="Van den Veyver I.B."/>
            <person name="Sahoo T."/>
            <person name="Ao A."/>
            <person name="Majewski J."/>
            <person name="Taketo T."/>
            <person name="Slim R."/>
        </authorList>
    </citation>
    <scope>DISRUPTION PHENOTYPE</scope>
</reference>
<dbReference type="EMBL" id="AY270177">
    <property type="protein sequence ID" value="AAP74551.1"/>
    <property type="molecule type" value="mRNA"/>
</dbReference>
<dbReference type="EMBL" id="AK016514">
    <property type="protein sequence ID" value="BAB30279.2"/>
    <property type="molecule type" value="mRNA"/>
</dbReference>
<dbReference type="EMBL" id="AC102176">
    <property type="status" value="NOT_ANNOTATED_CDS"/>
    <property type="molecule type" value="Genomic_DNA"/>
</dbReference>
<dbReference type="EMBL" id="BC137749">
    <property type="protein sequence ID" value="AAI37750.1"/>
    <property type="molecule type" value="mRNA"/>
</dbReference>
<dbReference type="CCDS" id="CCDS79396.1">
    <molecule id="Q9D4I2-2"/>
</dbReference>
<dbReference type="CCDS" id="CCDS88810.1">
    <molecule id="Q9D4I2-1"/>
</dbReference>
<dbReference type="RefSeq" id="NP_001297364.1">
    <molecule id="Q9D4I2-2"/>
    <property type="nucleotide sequence ID" value="NM_001310435.1"/>
</dbReference>
<dbReference type="RefSeq" id="NP_083173.2">
    <molecule id="Q9D4I2-1"/>
    <property type="nucleotide sequence ID" value="NM_028897.3"/>
</dbReference>
<dbReference type="BioGRID" id="216697">
    <property type="interactions" value="1"/>
</dbReference>
<dbReference type="FunCoup" id="Q9D4I2">
    <property type="interactions" value="61"/>
</dbReference>
<dbReference type="STRING" id="10090.ENSMUSP00000140479"/>
<dbReference type="GlyGen" id="Q9D4I2">
    <property type="glycosylation" value="1 site, 1 O-linked glycan (1 site)"/>
</dbReference>
<dbReference type="iPTMnet" id="Q9D4I2"/>
<dbReference type="PhosphoSitePlus" id="Q9D4I2"/>
<dbReference type="PaxDb" id="10090-ENSMUSP00000086582"/>
<dbReference type="Antibodypedia" id="27052">
    <property type="antibodies" value="78 antibodies from 16 providers"/>
</dbReference>
<dbReference type="Ensembl" id="ENSMUST00000089178.11">
    <molecule id="Q9D4I2-1"/>
    <property type="protein sequence ID" value="ENSMUSP00000086582.6"/>
    <property type="gene ID" value="ENSMUSG00000068117.11"/>
</dbReference>
<dbReference type="Ensembl" id="ENSMUST00000188048.7">
    <molecule id="Q9D4I2-2"/>
    <property type="protein sequence ID" value="ENSMUSP00000139689.2"/>
    <property type="gene ID" value="ENSMUSG00000068117.11"/>
</dbReference>
<dbReference type="Ensembl" id="ENSMUST00000189540.7">
    <molecule id="Q9D4I2-2"/>
    <property type="protein sequence ID" value="ENSMUSP00000140479.2"/>
    <property type="gene ID" value="ENSMUSG00000068117.11"/>
</dbReference>
<dbReference type="GeneID" id="74369"/>
<dbReference type="KEGG" id="mmu:74369"/>
<dbReference type="UCSC" id="uc007wyd.2">
    <molecule id="Q9D4I2-2"/>
    <property type="organism name" value="mouse"/>
</dbReference>
<dbReference type="AGR" id="MGI:3028590"/>
<dbReference type="CTD" id="150365"/>
<dbReference type="MGI" id="MGI:3028590">
    <property type="gene designation" value="Mei1"/>
</dbReference>
<dbReference type="VEuPathDB" id="HostDB:ENSMUSG00000068117"/>
<dbReference type="eggNOG" id="ENOG502QV5Z">
    <property type="taxonomic scope" value="Eukaryota"/>
</dbReference>
<dbReference type="GeneTree" id="ENSGT00390000002077"/>
<dbReference type="InParanoid" id="Q9D4I2"/>
<dbReference type="OMA" id="RVCIHFI"/>
<dbReference type="PhylomeDB" id="Q9D4I2"/>
<dbReference type="TreeFam" id="TF336500"/>
<dbReference type="BioGRID-ORCS" id="74369">
    <property type="hits" value="0 hits in 71 CRISPR screens"/>
</dbReference>
<dbReference type="ChiTaRS" id="Mei1">
    <property type="organism name" value="mouse"/>
</dbReference>
<dbReference type="PRO" id="PR:Q9D4I2"/>
<dbReference type="Proteomes" id="UP000000589">
    <property type="component" value="Chromosome 15"/>
</dbReference>
<dbReference type="RNAct" id="Q9D4I2">
    <property type="molecule type" value="protein"/>
</dbReference>
<dbReference type="Bgee" id="ENSMUSG00000068117">
    <property type="expression patterns" value="Expressed in lumbar dorsal root ganglion and 25 other cell types or tissues"/>
</dbReference>
<dbReference type="ExpressionAtlas" id="Q9D4I2">
    <property type="expression patterns" value="baseline and differential"/>
</dbReference>
<dbReference type="GO" id="GO:0007276">
    <property type="term" value="P:gamete generation"/>
    <property type="evidence" value="ECO:0000315"/>
    <property type="project" value="MGI"/>
</dbReference>
<dbReference type="GO" id="GO:0007141">
    <property type="term" value="P:male meiosis I"/>
    <property type="evidence" value="ECO:0000315"/>
    <property type="project" value="MGI"/>
</dbReference>
<dbReference type="GO" id="GO:0051321">
    <property type="term" value="P:meiotic cell cycle"/>
    <property type="evidence" value="ECO:0000315"/>
    <property type="project" value="MGI"/>
</dbReference>
<dbReference type="GO" id="GO:0000212">
    <property type="term" value="P:meiotic spindle organization"/>
    <property type="evidence" value="ECO:0000315"/>
    <property type="project" value="MGI"/>
</dbReference>
<dbReference type="GO" id="GO:0045141">
    <property type="term" value="P:meiotic telomere clustering"/>
    <property type="evidence" value="ECO:0000315"/>
    <property type="project" value="MGI"/>
</dbReference>
<dbReference type="GO" id="GO:0048477">
    <property type="term" value="P:oogenesis"/>
    <property type="evidence" value="ECO:0000315"/>
    <property type="project" value="MGI"/>
</dbReference>
<dbReference type="GO" id="GO:0040038">
    <property type="term" value="P:polar body extrusion after meiotic divisions"/>
    <property type="evidence" value="ECO:0000315"/>
    <property type="project" value="MGI"/>
</dbReference>
<dbReference type="GO" id="GO:0007286">
    <property type="term" value="P:spermatid development"/>
    <property type="evidence" value="ECO:0000315"/>
    <property type="project" value="MGI"/>
</dbReference>
<dbReference type="GO" id="GO:0007283">
    <property type="term" value="P:spermatogenesis"/>
    <property type="evidence" value="ECO:0000315"/>
    <property type="project" value="MGI"/>
</dbReference>
<dbReference type="InterPro" id="IPR016024">
    <property type="entry name" value="ARM-type_fold"/>
</dbReference>
<dbReference type="InterPro" id="IPR052133">
    <property type="entry name" value="Immune_Signaling-Apoptosis_Reg"/>
</dbReference>
<dbReference type="PANTHER" id="PTHR12044">
    <property type="entry name" value="BCL2 INTERACTING MEDIATOR OF CELL DEATH"/>
    <property type="match status" value="1"/>
</dbReference>
<dbReference type="PANTHER" id="PTHR12044:SF10">
    <property type="entry name" value="MEIOSIS INHIBITOR PROTEIN 1"/>
    <property type="match status" value="1"/>
</dbReference>
<dbReference type="SUPFAM" id="SSF48371">
    <property type="entry name" value="ARM repeat"/>
    <property type="match status" value="2"/>
</dbReference>
<protein>
    <recommendedName>
        <fullName>Meiosis inhibitor protein 1</fullName>
    </recommendedName>
    <alternativeName>
        <fullName>Meiosis defective protein 1</fullName>
    </alternativeName>
</protein>
<organism>
    <name type="scientific">Mus musculus</name>
    <name type="common">Mouse</name>
    <dbReference type="NCBI Taxonomy" id="10090"/>
    <lineage>
        <taxon>Eukaryota</taxon>
        <taxon>Metazoa</taxon>
        <taxon>Chordata</taxon>
        <taxon>Craniata</taxon>
        <taxon>Vertebrata</taxon>
        <taxon>Euteleostomi</taxon>
        <taxon>Mammalia</taxon>
        <taxon>Eutheria</taxon>
        <taxon>Euarchontoglires</taxon>
        <taxon>Glires</taxon>
        <taxon>Rodentia</taxon>
        <taxon>Myomorpha</taxon>
        <taxon>Muroidea</taxon>
        <taxon>Muridae</taxon>
        <taxon>Murinae</taxon>
        <taxon>Mus</taxon>
        <taxon>Mus</taxon>
    </lineage>
</organism>